<comment type="function">
    <text evidence="1">Catalyzes the acyloin condensation reaction between C atoms 2 and 3 of pyruvate and glyceraldehyde 3-phosphate to yield 1-deoxy-D-xylulose-5-phosphate (DXP).</text>
</comment>
<comment type="catalytic activity">
    <reaction evidence="1">
        <text>D-glyceraldehyde 3-phosphate + pyruvate + H(+) = 1-deoxy-D-xylulose 5-phosphate + CO2</text>
        <dbReference type="Rhea" id="RHEA:12605"/>
        <dbReference type="ChEBI" id="CHEBI:15361"/>
        <dbReference type="ChEBI" id="CHEBI:15378"/>
        <dbReference type="ChEBI" id="CHEBI:16526"/>
        <dbReference type="ChEBI" id="CHEBI:57792"/>
        <dbReference type="ChEBI" id="CHEBI:59776"/>
        <dbReference type="EC" id="2.2.1.7"/>
    </reaction>
</comment>
<comment type="cofactor">
    <cofactor evidence="1">
        <name>Mg(2+)</name>
        <dbReference type="ChEBI" id="CHEBI:18420"/>
    </cofactor>
    <text evidence="1">Binds 1 Mg(2+) ion per subunit.</text>
</comment>
<comment type="cofactor">
    <cofactor evidence="1">
        <name>thiamine diphosphate</name>
        <dbReference type="ChEBI" id="CHEBI:58937"/>
    </cofactor>
    <text evidence="1">Binds 1 thiamine pyrophosphate per subunit.</text>
</comment>
<comment type="pathway">
    <text evidence="1">Metabolic intermediate biosynthesis; 1-deoxy-D-xylulose 5-phosphate biosynthesis; 1-deoxy-D-xylulose 5-phosphate from D-glyceraldehyde 3-phosphate and pyruvate: step 1/1.</text>
</comment>
<comment type="subunit">
    <text evidence="1">Homodimer.</text>
</comment>
<comment type="similarity">
    <text evidence="1">Belongs to the transketolase family. DXPS subfamily.</text>
</comment>
<protein>
    <recommendedName>
        <fullName evidence="1">1-deoxy-D-xylulose-5-phosphate synthase</fullName>
        <ecNumber evidence="1">2.2.1.7</ecNumber>
    </recommendedName>
    <alternativeName>
        <fullName evidence="1">1-deoxyxylulose-5-phosphate synthase</fullName>
        <shortName evidence="1">DXP synthase</shortName>
        <shortName evidence="1">DXPS</shortName>
    </alternativeName>
</protein>
<accession>Q5LH44</accession>
<dbReference type="EC" id="2.2.1.7" evidence="1"/>
<dbReference type="EMBL" id="CR626927">
    <property type="protein sequence ID" value="CAH06542.1"/>
    <property type="molecule type" value="Genomic_DNA"/>
</dbReference>
<dbReference type="RefSeq" id="WP_010992199.1">
    <property type="nucleotide sequence ID" value="NZ_UFTH01000001.1"/>
</dbReference>
<dbReference type="SMR" id="Q5LH44"/>
<dbReference type="PaxDb" id="272559-BF9343_0761"/>
<dbReference type="GeneID" id="60366713"/>
<dbReference type="KEGG" id="bfs:BF9343_0761"/>
<dbReference type="eggNOG" id="COG1154">
    <property type="taxonomic scope" value="Bacteria"/>
</dbReference>
<dbReference type="HOGENOM" id="CLU_009227_1_4_10"/>
<dbReference type="UniPathway" id="UPA00064">
    <property type="reaction ID" value="UER00091"/>
</dbReference>
<dbReference type="Proteomes" id="UP000006731">
    <property type="component" value="Chromosome"/>
</dbReference>
<dbReference type="GO" id="GO:0005829">
    <property type="term" value="C:cytosol"/>
    <property type="evidence" value="ECO:0007669"/>
    <property type="project" value="TreeGrafter"/>
</dbReference>
<dbReference type="GO" id="GO:0008661">
    <property type="term" value="F:1-deoxy-D-xylulose-5-phosphate synthase activity"/>
    <property type="evidence" value="ECO:0007669"/>
    <property type="project" value="UniProtKB-UniRule"/>
</dbReference>
<dbReference type="GO" id="GO:0000287">
    <property type="term" value="F:magnesium ion binding"/>
    <property type="evidence" value="ECO:0007669"/>
    <property type="project" value="UniProtKB-UniRule"/>
</dbReference>
<dbReference type="GO" id="GO:0030976">
    <property type="term" value="F:thiamine pyrophosphate binding"/>
    <property type="evidence" value="ECO:0007669"/>
    <property type="project" value="UniProtKB-UniRule"/>
</dbReference>
<dbReference type="GO" id="GO:0052865">
    <property type="term" value="P:1-deoxy-D-xylulose 5-phosphate biosynthetic process"/>
    <property type="evidence" value="ECO:0007669"/>
    <property type="project" value="UniProtKB-UniPathway"/>
</dbReference>
<dbReference type="GO" id="GO:0019288">
    <property type="term" value="P:isopentenyl diphosphate biosynthetic process, methylerythritol 4-phosphate pathway"/>
    <property type="evidence" value="ECO:0007669"/>
    <property type="project" value="TreeGrafter"/>
</dbReference>
<dbReference type="GO" id="GO:0016114">
    <property type="term" value="P:terpenoid biosynthetic process"/>
    <property type="evidence" value="ECO:0007669"/>
    <property type="project" value="UniProtKB-UniRule"/>
</dbReference>
<dbReference type="GO" id="GO:0009228">
    <property type="term" value="P:thiamine biosynthetic process"/>
    <property type="evidence" value="ECO:0007669"/>
    <property type="project" value="UniProtKB-UniRule"/>
</dbReference>
<dbReference type="CDD" id="cd02007">
    <property type="entry name" value="TPP_DXS"/>
    <property type="match status" value="1"/>
</dbReference>
<dbReference type="CDD" id="cd07033">
    <property type="entry name" value="TPP_PYR_DXS_TK_like"/>
    <property type="match status" value="1"/>
</dbReference>
<dbReference type="FunFam" id="3.40.50.920:FF:000002">
    <property type="entry name" value="1-deoxy-D-xylulose-5-phosphate synthase"/>
    <property type="match status" value="1"/>
</dbReference>
<dbReference type="FunFam" id="3.40.50.970:FF:000005">
    <property type="entry name" value="1-deoxy-D-xylulose-5-phosphate synthase"/>
    <property type="match status" value="1"/>
</dbReference>
<dbReference type="Gene3D" id="3.40.50.920">
    <property type="match status" value="1"/>
</dbReference>
<dbReference type="Gene3D" id="3.40.50.970">
    <property type="match status" value="2"/>
</dbReference>
<dbReference type="HAMAP" id="MF_00315">
    <property type="entry name" value="DXP_synth"/>
    <property type="match status" value="1"/>
</dbReference>
<dbReference type="InterPro" id="IPR005477">
    <property type="entry name" value="Dxylulose-5-P_synthase"/>
</dbReference>
<dbReference type="InterPro" id="IPR029061">
    <property type="entry name" value="THDP-binding"/>
</dbReference>
<dbReference type="InterPro" id="IPR009014">
    <property type="entry name" value="Transketo_C/PFOR_II"/>
</dbReference>
<dbReference type="InterPro" id="IPR005475">
    <property type="entry name" value="Transketolase-like_Pyr-bd"/>
</dbReference>
<dbReference type="InterPro" id="IPR020826">
    <property type="entry name" value="Transketolase_BS"/>
</dbReference>
<dbReference type="InterPro" id="IPR033248">
    <property type="entry name" value="Transketolase_C"/>
</dbReference>
<dbReference type="NCBIfam" id="TIGR00204">
    <property type="entry name" value="dxs"/>
    <property type="match status" value="1"/>
</dbReference>
<dbReference type="NCBIfam" id="NF003933">
    <property type="entry name" value="PRK05444.2-2"/>
    <property type="match status" value="1"/>
</dbReference>
<dbReference type="PANTHER" id="PTHR43322">
    <property type="entry name" value="1-D-DEOXYXYLULOSE 5-PHOSPHATE SYNTHASE-RELATED"/>
    <property type="match status" value="1"/>
</dbReference>
<dbReference type="PANTHER" id="PTHR43322:SF5">
    <property type="entry name" value="1-DEOXY-D-XYLULOSE-5-PHOSPHATE SYNTHASE, CHLOROPLASTIC"/>
    <property type="match status" value="1"/>
</dbReference>
<dbReference type="Pfam" id="PF13292">
    <property type="entry name" value="DXP_synthase_N"/>
    <property type="match status" value="1"/>
</dbReference>
<dbReference type="Pfam" id="PF02779">
    <property type="entry name" value="Transket_pyr"/>
    <property type="match status" value="1"/>
</dbReference>
<dbReference type="Pfam" id="PF02780">
    <property type="entry name" value="Transketolase_C"/>
    <property type="match status" value="1"/>
</dbReference>
<dbReference type="SMART" id="SM00861">
    <property type="entry name" value="Transket_pyr"/>
    <property type="match status" value="1"/>
</dbReference>
<dbReference type="SUPFAM" id="SSF52518">
    <property type="entry name" value="Thiamin diphosphate-binding fold (THDP-binding)"/>
    <property type="match status" value="2"/>
</dbReference>
<dbReference type="SUPFAM" id="SSF52922">
    <property type="entry name" value="TK C-terminal domain-like"/>
    <property type="match status" value="1"/>
</dbReference>
<dbReference type="PROSITE" id="PS00802">
    <property type="entry name" value="TRANSKETOLASE_2"/>
    <property type="match status" value="1"/>
</dbReference>
<sequence length="648" mass="71933">MKNEPTYSLLNAINYPKDLRQLSVDQLPEVCEELRQDIIKELSCNPGHFAASLGVVELTVALHYVYNTPYDRIVWDVGHQAYGHKILTGRREAFSTNRKLGGIRPFPSPEESEYDTFTCGHASNSISAALGMAVAAERKGEKDRHVVAVIGDGSMSGGLAFEGLNNASSTANNLLIILNDNDMAIDRSVGGMKQYLFNLTTSNRYNQLRFKTSRLLFKMGLLNEERRKALIRLGNSLKSLAAQQQNIFEGMNIRYFGPIDGHDVKNIARILHDIKDMQGPKILHLHTIKGKGFGPAEKQATIWHAPGKFDPVTGKRIVANTDGMPPLFQDVFGHTLVELAEKNKRIMGVTPAMPSGCSMNMLMDRMPDRAFDVGIAEGHAVTFSGGMAKDGLLPFCNIYSSFMQRAYDNIIHDVAIQKLNVVFCLDRAGLVGEDGPTHHGVFDMAYLRPIPNLTISSPMDEHELRRLMYTAQLPDKGPFAIRYPRGRGSLVDWECPLEEIPVGKGRKLKDGNDLAVITIGPIGKLAARAIERAEADTGISVAHYDLRFLKPLDEELLHEVGKKFRHIVTIEDGIIKGGMGCAILEFMADNGYYPEIRRIGVPDQFIEHGSVQQLYHLCGMDEEGIYKVITKNKLRMDAPVESCMATHS</sequence>
<keyword id="KW-0414">Isoprene biosynthesis</keyword>
<keyword id="KW-0460">Magnesium</keyword>
<keyword id="KW-0479">Metal-binding</keyword>
<keyword id="KW-0784">Thiamine biosynthesis</keyword>
<keyword id="KW-0786">Thiamine pyrophosphate</keyword>
<keyword id="KW-0808">Transferase</keyword>
<gene>
    <name evidence="1" type="primary">dxs</name>
    <name type="ordered locus">BF0796</name>
</gene>
<name>DXS_BACFN</name>
<proteinExistence type="inferred from homology"/>
<evidence type="ECO:0000255" key="1">
    <source>
        <dbReference type="HAMAP-Rule" id="MF_00315"/>
    </source>
</evidence>
<reference key="1">
    <citation type="journal article" date="2005" name="Science">
        <title>Extensive DNA inversions in the B. fragilis genome control variable gene expression.</title>
        <authorList>
            <person name="Cerdeno-Tarraga A.-M."/>
            <person name="Patrick S."/>
            <person name="Crossman L.C."/>
            <person name="Blakely G."/>
            <person name="Abratt V."/>
            <person name="Lennard N."/>
            <person name="Poxton I."/>
            <person name="Duerden B."/>
            <person name="Harris B."/>
            <person name="Quail M.A."/>
            <person name="Barron A."/>
            <person name="Clark L."/>
            <person name="Corton C."/>
            <person name="Doggett J."/>
            <person name="Holden M.T.G."/>
            <person name="Larke N."/>
            <person name="Line A."/>
            <person name="Lord A."/>
            <person name="Norbertczak H."/>
            <person name="Ormond D."/>
            <person name="Price C."/>
            <person name="Rabbinowitsch E."/>
            <person name="Woodward J."/>
            <person name="Barrell B.G."/>
            <person name="Parkhill J."/>
        </authorList>
    </citation>
    <scope>NUCLEOTIDE SEQUENCE [LARGE SCALE GENOMIC DNA]</scope>
    <source>
        <strain>ATCC 25285 / DSM 2151 / CCUG 4856 / JCM 11019 / LMG 10263 / NCTC 9343 / Onslow / VPI 2553 / EN-2</strain>
    </source>
</reference>
<feature type="chain" id="PRO_0000256375" description="1-deoxy-D-xylulose-5-phosphate synthase">
    <location>
        <begin position="1"/>
        <end position="648"/>
    </location>
</feature>
<feature type="binding site" evidence="1">
    <location>
        <position position="79"/>
    </location>
    <ligand>
        <name>thiamine diphosphate</name>
        <dbReference type="ChEBI" id="CHEBI:58937"/>
    </ligand>
</feature>
<feature type="binding site" evidence="1">
    <location>
        <begin position="120"/>
        <end position="122"/>
    </location>
    <ligand>
        <name>thiamine diphosphate</name>
        <dbReference type="ChEBI" id="CHEBI:58937"/>
    </ligand>
</feature>
<feature type="binding site" evidence="1">
    <location>
        <position position="152"/>
    </location>
    <ligand>
        <name>Mg(2+)</name>
        <dbReference type="ChEBI" id="CHEBI:18420"/>
    </ligand>
</feature>
<feature type="binding site" evidence="1">
    <location>
        <begin position="153"/>
        <end position="154"/>
    </location>
    <ligand>
        <name>thiamine diphosphate</name>
        <dbReference type="ChEBI" id="CHEBI:58937"/>
    </ligand>
</feature>
<feature type="binding site" evidence="1">
    <location>
        <position position="181"/>
    </location>
    <ligand>
        <name>Mg(2+)</name>
        <dbReference type="ChEBI" id="CHEBI:18420"/>
    </ligand>
</feature>
<feature type="binding site" evidence="1">
    <location>
        <position position="181"/>
    </location>
    <ligand>
        <name>thiamine diphosphate</name>
        <dbReference type="ChEBI" id="CHEBI:58937"/>
    </ligand>
</feature>
<feature type="binding site" evidence="1">
    <location>
        <position position="293"/>
    </location>
    <ligand>
        <name>thiamine diphosphate</name>
        <dbReference type="ChEBI" id="CHEBI:58937"/>
    </ligand>
</feature>
<feature type="binding site" evidence="1">
    <location>
        <position position="377"/>
    </location>
    <ligand>
        <name>thiamine diphosphate</name>
        <dbReference type="ChEBI" id="CHEBI:58937"/>
    </ligand>
</feature>
<organism>
    <name type="scientific">Bacteroides fragilis (strain ATCC 25285 / DSM 2151 / CCUG 4856 / JCM 11019 / LMG 10263 / NCTC 9343 / Onslow / VPI 2553 / EN-2)</name>
    <dbReference type="NCBI Taxonomy" id="272559"/>
    <lineage>
        <taxon>Bacteria</taxon>
        <taxon>Pseudomonadati</taxon>
        <taxon>Bacteroidota</taxon>
        <taxon>Bacteroidia</taxon>
        <taxon>Bacteroidales</taxon>
        <taxon>Bacteroidaceae</taxon>
        <taxon>Bacteroides</taxon>
    </lineage>
</organism>